<reference key="1">
    <citation type="journal article" date="2008" name="J. Bacteriol.">
        <title>The pangenome structure of Escherichia coli: comparative genomic analysis of E. coli commensal and pathogenic isolates.</title>
        <authorList>
            <person name="Rasko D.A."/>
            <person name="Rosovitz M.J."/>
            <person name="Myers G.S.A."/>
            <person name="Mongodin E.F."/>
            <person name="Fricke W.F."/>
            <person name="Gajer P."/>
            <person name="Crabtree J."/>
            <person name="Sebaihia M."/>
            <person name="Thomson N.R."/>
            <person name="Chaudhuri R."/>
            <person name="Henderson I.R."/>
            <person name="Sperandio V."/>
            <person name="Ravel J."/>
        </authorList>
    </citation>
    <scope>NUCLEOTIDE SEQUENCE [LARGE SCALE GENOMIC DNA]</scope>
    <source>
        <strain>HS</strain>
    </source>
</reference>
<proteinExistence type="inferred from homology"/>
<accession>A8A3H0</accession>
<keyword id="KW-0067">ATP-binding</keyword>
<keyword id="KW-0317">Glutathione biosynthesis</keyword>
<keyword id="KW-0436">Ligase</keyword>
<keyword id="KW-0547">Nucleotide-binding</keyword>
<gene>
    <name evidence="1" type="primary">gshA</name>
    <name type="ordered locus">EcHS_A2824</name>
</gene>
<protein>
    <recommendedName>
        <fullName evidence="1">Glutamate--cysteine ligase</fullName>
        <ecNumber evidence="1">6.3.2.2</ecNumber>
    </recommendedName>
    <alternativeName>
        <fullName evidence="1">Gamma-ECS</fullName>
        <shortName evidence="1">GCS</shortName>
    </alternativeName>
    <alternativeName>
        <fullName evidence="1">Gamma-glutamylcysteine synthetase</fullName>
    </alternativeName>
</protein>
<name>GSH1_ECOHS</name>
<feature type="chain" id="PRO_1000061181" description="Glutamate--cysteine ligase">
    <location>
        <begin position="1"/>
        <end position="518"/>
    </location>
</feature>
<comment type="catalytic activity">
    <reaction evidence="1">
        <text>L-cysteine + L-glutamate + ATP = gamma-L-glutamyl-L-cysteine + ADP + phosphate + H(+)</text>
        <dbReference type="Rhea" id="RHEA:13285"/>
        <dbReference type="ChEBI" id="CHEBI:15378"/>
        <dbReference type="ChEBI" id="CHEBI:29985"/>
        <dbReference type="ChEBI" id="CHEBI:30616"/>
        <dbReference type="ChEBI" id="CHEBI:35235"/>
        <dbReference type="ChEBI" id="CHEBI:43474"/>
        <dbReference type="ChEBI" id="CHEBI:58173"/>
        <dbReference type="ChEBI" id="CHEBI:456216"/>
        <dbReference type="EC" id="6.3.2.2"/>
    </reaction>
</comment>
<comment type="pathway">
    <text evidence="1">Sulfur metabolism; glutathione biosynthesis; glutathione from L-cysteine and L-glutamate: step 1/2.</text>
</comment>
<comment type="similarity">
    <text evidence="1">Belongs to the glutamate--cysteine ligase type 1 family. Type 1 subfamily.</text>
</comment>
<organism>
    <name type="scientific">Escherichia coli O9:H4 (strain HS)</name>
    <dbReference type="NCBI Taxonomy" id="331112"/>
    <lineage>
        <taxon>Bacteria</taxon>
        <taxon>Pseudomonadati</taxon>
        <taxon>Pseudomonadota</taxon>
        <taxon>Gammaproteobacteria</taxon>
        <taxon>Enterobacterales</taxon>
        <taxon>Enterobacteriaceae</taxon>
        <taxon>Escherichia</taxon>
    </lineage>
</organism>
<dbReference type="EC" id="6.3.2.2" evidence="1"/>
<dbReference type="EMBL" id="CP000802">
    <property type="protein sequence ID" value="ABV07074.1"/>
    <property type="molecule type" value="Genomic_DNA"/>
</dbReference>
<dbReference type="RefSeq" id="WP_000611804.1">
    <property type="nucleotide sequence ID" value="NC_009800.1"/>
</dbReference>
<dbReference type="SMR" id="A8A3H0"/>
<dbReference type="KEGG" id="ecx:EcHS_A2824"/>
<dbReference type="HOGENOM" id="CLU_020728_3_0_6"/>
<dbReference type="UniPathway" id="UPA00142">
    <property type="reaction ID" value="UER00209"/>
</dbReference>
<dbReference type="GO" id="GO:0005829">
    <property type="term" value="C:cytosol"/>
    <property type="evidence" value="ECO:0007669"/>
    <property type="project" value="TreeGrafter"/>
</dbReference>
<dbReference type="GO" id="GO:0005524">
    <property type="term" value="F:ATP binding"/>
    <property type="evidence" value="ECO:0007669"/>
    <property type="project" value="UniProtKB-KW"/>
</dbReference>
<dbReference type="GO" id="GO:0004357">
    <property type="term" value="F:glutamate-cysteine ligase activity"/>
    <property type="evidence" value="ECO:0007669"/>
    <property type="project" value="UniProtKB-UniRule"/>
</dbReference>
<dbReference type="GO" id="GO:0046872">
    <property type="term" value="F:metal ion binding"/>
    <property type="evidence" value="ECO:0007669"/>
    <property type="project" value="TreeGrafter"/>
</dbReference>
<dbReference type="GO" id="GO:0006750">
    <property type="term" value="P:glutathione biosynthetic process"/>
    <property type="evidence" value="ECO:0007669"/>
    <property type="project" value="UniProtKB-UniRule"/>
</dbReference>
<dbReference type="FunFam" id="3.30.590.20:FF:000001">
    <property type="entry name" value="Glutamate--cysteine ligase"/>
    <property type="match status" value="1"/>
</dbReference>
<dbReference type="Gene3D" id="3.30.590.20">
    <property type="match status" value="1"/>
</dbReference>
<dbReference type="HAMAP" id="MF_00578">
    <property type="entry name" value="Glu_cys_ligase"/>
    <property type="match status" value="1"/>
</dbReference>
<dbReference type="InterPro" id="IPR014746">
    <property type="entry name" value="Gln_synth/guanido_kin_cat_dom"/>
</dbReference>
<dbReference type="InterPro" id="IPR007370">
    <property type="entry name" value="Glu_cys_ligase"/>
</dbReference>
<dbReference type="InterPro" id="IPR006334">
    <property type="entry name" value="Glut_cys_ligase"/>
</dbReference>
<dbReference type="NCBIfam" id="TIGR01434">
    <property type="entry name" value="glu_cys_ligase"/>
    <property type="match status" value="1"/>
</dbReference>
<dbReference type="PANTHER" id="PTHR38761">
    <property type="entry name" value="GLUTAMATE--CYSTEINE LIGASE"/>
    <property type="match status" value="1"/>
</dbReference>
<dbReference type="PANTHER" id="PTHR38761:SF1">
    <property type="entry name" value="GLUTAMATE--CYSTEINE LIGASE"/>
    <property type="match status" value="1"/>
</dbReference>
<dbReference type="Pfam" id="PF04262">
    <property type="entry name" value="Glu_cys_ligase"/>
    <property type="match status" value="1"/>
</dbReference>
<dbReference type="SUPFAM" id="SSF55931">
    <property type="entry name" value="Glutamine synthetase/guanido kinase"/>
    <property type="match status" value="1"/>
</dbReference>
<evidence type="ECO:0000255" key="1">
    <source>
        <dbReference type="HAMAP-Rule" id="MF_00578"/>
    </source>
</evidence>
<sequence length="518" mass="58269">MIPDVSQALAWLEKHPQALKGIQRGLERETLRVNADGTLATTGHPEALGSALTHKWITTDFAEALLEFITPVDGDIEHMLTFMRDLHRYTARNMGDERMWPLSMPCYIAEGQDIELAQYGTSNTGRFKTLYREGLKNRYGALMQTISGVHYNFSLPMAFWQAKCGDISGADAKEKISAGYFRVIRNYYRFGWVIPYLFGASPAICSSFLQGKPTSLPFEKTECGMYYLPYATSLRLSDLGYTNKSQSNLGITFNDLYEYVAGLKQAIKTPSEEYAKIGIEKDGKRLQINSNVLQIENELYAPIRPKRVTRSGESPSDALLRGGIEYIEVRSLDINPFSPIGVDEQQVRFLDLFMVWCALADAPEMSSSELACTRVNWNRVILEGRKPGLTLGIGCETAQFPLPQVGKDLFRDLKRVAQTLDSINGGEAYQKVCDELVACFDNPDLTFSARILRSMIDTGIGGTGKAFAEAYRNLLREEPLEILREEDFVAEREASERRQQEMEAADTEPFAVWLEKHA</sequence>